<accession>B8F6K4</accession>
<evidence type="ECO:0000255" key="1">
    <source>
        <dbReference type="HAMAP-Rule" id="MF_00672"/>
    </source>
</evidence>
<keyword id="KW-0997">Cell inner membrane</keyword>
<keyword id="KW-1003">Cell membrane</keyword>
<keyword id="KW-0472">Membrane</keyword>
<keyword id="KW-1185">Reference proteome</keyword>
<keyword id="KW-0812">Transmembrane</keyword>
<keyword id="KW-1133">Transmembrane helix</keyword>
<proteinExistence type="inferred from homology"/>
<comment type="subcellular location">
    <subcellularLocation>
        <location evidence="1">Cell inner membrane</location>
        <topology evidence="1">Multi-pass membrane protein</topology>
    </subcellularLocation>
</comment>
<comment type="similarity">
    <text evidence="1">Belongs to the UPF0761 family.</text>
</comment>
<feature type="chain" id="PRO_0000391033" description="UPF0761 membrane protein HAPS_1376">
    <location>
        <begin position="1"/>
        <end position="282"/>
    </location>
</feature>
<feature type="transmembrane region" description="Helical" evidence="1">
    <location>
        <begin position="32"/>
        <end position="52"/>
    </location>
</feature>
<feature type="transmembrane region" description="Helical" evidence="1">
    <location>
        <begin position="89"/>
        <end position="109"/>
    </location>
</feature>
<feature type="transmembrane region" description="Helical" evidence="1">
    <location>
        <begin position="124"/>
        <end position="144"/>
    </location>
</feature>
<feature type="transmembrane region" description="Helical" evidence="1">
    <location>
        <begin position="170"/>
        <end position="190"/>
    </location>
</feature>
<feature type="transmembrane region" description="Helical" evidence="1">
    <location>
        <begin position="202"/>
        <end position="222"/>
    </location>
</feature>
<feature type="transmembrane region" description="Helical" evidence="1">
    <location>
        <begin position="234"/>
        <end position="254"/>
    </location>
</feature>
<reference key="1">
    <citation type="journal article" date="2009" name="J. Bacteriol.">
        <title>Complete genome sequence of Haemophilus parasuis SH0165.</title>
        <authorList>
            <person name="Yue M."/>
            <person name="Yang F."/>
            <person name="Yang J."/>
            <person name="Bei W."/>
            <person name="Cai X."/>
            <person name="Chen L."/>
            <person name="Dong J."/>
            <person name="Zhou R."/>
            <person name="Jin M."/>
            <person name="Jin Q."/>
            <person name="Chen H."/>
        </authorList>
    </citation>
    <scope>NUCLEOTIDE SEQUENCE [LARGE SCALE GENOMIC DNA]</scope>
    <source>
        <strain>SH0165</strain>
    </source>
</reference>
<protein>
    <recommendedName>
        <fullName evidence="1">UPF0761 membrane protein HAPS_1376</fullName>
    </recommendedName>
</protein>
<gene>
    <name type="ordered locus">HAPS_1376</name>
</gene>
<sequence>MKNLIFFFKLFIHRFQQNKIAVYSGYLTYTTLLSLVPLIMVVFSVFTLLPIFEQATAQLKELVYDNFAPSAGDMVQQYLEMFVDNSKKMGIISIIGLVVVAVMLISSIDNALNEIWHNTKKRSVILSFVVYLAVLIFAPIFAGASIAISSYIFSLEMFSQDGLFSFSHHLLKFIPFVLTWLLFALVYLIVPNTQVKFRHAAVGALFAGVFFTLGKQIFIWYITTFPSYQAIYGALATIPIMIVWIHLSWQVVLLGGQFASVLKDMEMIKAGELANPLTEDRE</sequence>
<name>Y1376_GLAP5</name>
<dbReference type="EMBL" id="CP001321">
    <property type="protein sequence ID" value="ACL32956.1"/>
    <property type="molecule type" value="Genomic_DNA"/>
</dbReference>
<dbReference type="RefSeq" id="WP_010787130.1">
    <property type="nucleotide sequence ID" value="NC_011852.1"/>
</dbReference>
<dbReference type="STRING" id="557723.HAPS_1376"/>
<dbReference type="KEGG" id="hap:HAPS_1376"/>
<dbReference type="PATRIC" id="fig|557723.8.peg.1351"/>
<dbReference type="HOGENOM" id="CLU_032288_0_0_6"/>
<dbReference type="Proteomes" id="UP000006743">
    <property type="component" value="Chromosome"/>
</dbReference>
<dbReference type="GO" id="GO:0005886">
    <property type="term" value="C:plasma membrane"/>
    <property type="evidence" value="ECO:0007669"/>
    <property type="project" value="UniProtKB-SubCell"/>
</dbReference>
<dbReference type="HAMAP" id="MF_00672">
    <property type="entry name" value="UPF0761"/>
    <property type="match status" value="1"/>
</dbReference>
<dbReference type="InterPro" id="IPR023679">
    <property type="entry name" value="UPF0761_bac"/>
</dbReference>
<dbReference type="InterPro" id="IPR017039">
    <property type="entry name" value="Virul_fac_BrkB"/>
</dbReference>
<dbReference type="NCBIfam" id="NF002457">
    <property type="entry name" value="PRK01637.1"/>
    <property type="match status" value="1"/>
</dbReference>
<dbReference type="NCBIfam" id="TIGR00765">
    <property type="entry name" value="yihY_not_rbn"/>
    <property type="match status" value="1"/>
</dbReference>
<dbReference type="PANTHER" id="PTHR30213">
    <property type="entry name" value="INNER MEMBRANE PROTEIN YHJD"/>
    <property type="match status" value="1"/>
</dbReference>
<dbReference type="PANTHER" id="PTHR30213:SF0">
    <property type="entry name" value="UPF0761 MEMBRANE PROTEIN YIHY"/>
    <property type="match status" value="1"/>
</dbReference>
<dbReference type="Pfam" id="PF03631">
    <property type="entry name" value="Virul_fac_BrkB"/>
    <property type="match status" value="1"/>
</dbReference>
<dbReference type="PIRSF" id="PIRSF035875">
    <property type="entry name" value="RNase_BN"/>
    <property type="match status" value="1"/>
</dbReference>
<organism>
    <name type="scientific">Glaesserella parasuis serovar 5 (strain SH0165)</name>
    <name type="common">Haemophilus parasuis</name>
    <dbReference type="NCBI Taxonomy" id="557723"/>
    <lineage>
        <taxon>Bacteria</taxon>
        <taxon>Pseudomonadati</taxon>
        <taxon>Pseudomonadota</taxon>
        <taxon>Gammaproteobacteria</taxon>
        <taxon>Pasteurellales</taxon>
        <taxon>Pasteurellaceae</taxon>
        <taxon>Glaesserella</taxon>
    </lineage>
</organism>